<sequence length="297" mass="33213">MKAKTLSRHLREGVKNLSRNGWMTFASVSAVTVTLLLVGVFLTAIMNMNHFATKVEQDVEIRVHIDPAAKEADQKKLEDDMSKIAKVESIKYSSKEEELKRLIKSLGDSGKTFELFEQDNPLKNVFVVKAKEPTDTATIAKKIEKMQFVSNVQYGKGQVERLFDTVKTGRNIGIVLIAGLLFTAMFLISNTIKITIYARSTEIEIMKLVGATNWFIRWPFLLEGLFLGVLGSIIPIGLILVTYNSLQGMFNEKLGGTIFELLPYSPFVFQLAGLLVLIGALIGMWGSVMSIRRFLKV</sequence>
<comment type="function">
    <text evidence="1">Part of the ABC transporter FtsEX involved in asymmetric cellular division facilitating the initiation of sporulation.</text>
</comment>
<comment type="subunit">
    <text evidence="1">Interacts with FtsE.</text>
</comment>
<comment type="subcellular location">
    <subcellularLocation>
        <location evidence="1">Cell membrane</location>
        <topology evidence="1">Multi-pass membrane protein</topology>
    </subcellularLocation>
</comment>
<comment type="disruption phenotype">
    <text evidence="3">Vegetative bacilli mutant cells exhibit a distinct morphology in which individual bacilli appear kinked with frequent curves and sharp angles among chains of bacilli. Grows more slowly than wild-type bacteria. Affords resistance of vegetative B.anthracis bacilli to human chemokine CXCL10 regardless of their growth phase and to murine Cxcl9-mediated bactericidal activity. CXCL10 treated spores fail to germinate and resume vegetative growth indicating that FtsX is not required for the ability of CXCL10 to target the spore form of B.anthracis. In the absence of FtsX, CXCL10 is unable to localize to its presumed site of action at the bacterial cell membrane. No statistically significant differences are observed between wild-type and deletion mutant bacilli susceptibility to cationic antimicrobial peptide protamine.</text>
</comment>
<comment type="pharmaceutical">
    <text evidence="3">Potential therapeutic target of chemokine-mediated antimicrobial activity against B.anthracis to treat infection.</text>
</comment>
<comment type="similarity">
    <text evidence="2">Belongs to the ABC-4 integral membrane protein family. FtsX subfamily.</text>
</comment>
<reference evidence="6" key="1">
    <citation type="journal article" date="2003" name="Nature">
        <title>The genome sequence of Bacillus anthracis Ames and comparison to closely related bacteria.</title>
        <authorList>
            <person name="Read T.D."/>
            <person name="Peterson S.N."/>
            <person name="Tourasse N.J."/>
            <person name="Baillie L.W."/>
            <person name="Paulsen I.T."/>
            <person name="Nelson K.E."/>
            <person name="Tettelin H."/>
            <person name="Fouts D.E."/>
            <person name="Eisen J.A."/>
            <person name="Gill S.R."/>
            <person name="Holtzapple E.K."/>
            <person name="Okstad O.A."/>
            <person name="Helgason E."/>
            <person name="Rilstone J."/>
            <person name="Wu M."/>
            <person name="Kolonay J.F."/>
            <person name="Beanan M.J."/>
            <person name="Dodson R.J."/>
            <person name="Brinkac L.M."/>
            <person name="Gwinn M.L."/>
            <person name="DeBoy R.T."/>
            <person name="Madpu R."/>
            <person name="Daugherty S.C."/>
            <person name="Durkin A.S."/>
            <person name="Haft D.H."/>
            <person name="Nelson W.C."/>
            <person name="Peterson J.D."/>
            <person name="Pop M."/>
            <person name="Khouri H.M."/>
            <person name="Radune D."/>
            <person name="Benton J.L."/>
            <person name="Mahamoud Y."/>
            <person name="Jiang L."/>
            <person name="Hance I.R."/>
            <person name="Weidman J.F."/>
            <person name="Berry K.J."/>
            <person name="Plaut R.D."/>
            <person name="Wolf A.M."/>
            <person name="Watkins K.L."/>
            <person name="Nierman W.C."/>
            <person name="Hazen A."/>
            <person name="Cline R.T."/>
            <person name="Redmond C."/>
            <person name="Thwaite J.E."/>
            <person name="White O."/>
            <person name="Salzberg S.L."/>
            <person name="Thomason B."/>
            <person name="Friedlander A.M."/>
            <person name="Koehler T.M."/>
            <person name="Hanna P.C."/>
            <person name="Kolstoe A.-B."/>
            <person name="Fraser C.M."/>
        </authorList>
    </citation>
    <scope>NUCLEOTIDE SEQUENCE [LARGE SCALE GENOMIC DNA]</scope>
    <source>
        <strain>Ames / isolate Porton</strain>
    </source>
</reference>
<reference evidence="7" key="2">
    <citation type="journal article" date="2009" name="J. Bacteriol.">
        <title>The complete genome sequence of Bacillus anthracis Ames 'Ancestor'.</title>
        <authorList>
            <person name="Ravel J."/>
            <person name="Jiang L."/>
            <person name="Stanley S.T."/>
            <person name="Wilson M.R."/>
            <person name="Decker R.S."/>
            <person name="Read T.D."/>
            <person name="Worsham P."/>
            <person name="Keim P.S."/>
            <person name="Salzberg S.L."/>
            <person name="Fraser-Liggett C.M."/>
            <person name="Rasko D.A."/>
        </authorList>
    </citation>
    <scope>NUCLEOTIDE SEQUENCE [LARGE SCALE GENOMIC DNA]</scope>
    <source>
        <strain>Ames ancestor</strain>
    </source>
</reference>
<reference evidence="8" key="3">
    <citation type="submission" date="2004-01" db="EMBL/GenBank/DDBJ databases">
        <title>Complete genome sequence of Bacillus anthracis Sterne.</title>
        <authorList>
            <person name="Brettin T.S."/>
            <person name="Bruce D."/>
            <person name="Challacombe J.F."/>
            <person name="Gilna P."/>
            <person name="Han C."/>
            <person name="Hill K."/>
            <person name="Hitchcock P."/>
            <person name="Jackson P."/>
            <person name="Keim P."/>
            <person name="Longmire J."/>
            <person name="Lucas S."/>
            <person name="Okinaka R."/>
            <person name="Richardson P."/>
            <person name="Rubin E."/>
            <person name="Tice H."/>
        </authorList>
    </citation>
    <scope>NUCLEOTIDE SEQUENCE [LARGE SCALE GENOMIC DNA]</scope>
    <source>
        <strain>Sterne</strain>
    </source>
</reference>
<reference evidence="5" key="4">
    <citation type="journal article" date="2011" name="Proc. Natl. Acad. Sci. U.S.A.">
        <title>Identification of the bacterial protein FtsX as a unique target of chemokine-mediated antimicrobial activity against Bacillus anthracis.</title>
        <authorList>
            <person name="Crawford M.A."/>
            <person name="Lowe D.E."/>
            <person name="Fisher D.J."/>
            <person name="Stibitz S."/>
            <person name="Plaut R.D."/>
            <person name="Beaber J.W."/>
            <person name="Zemansky J."/>
            <person name="Mehrad B."/>
            <person name="Glomski I.J."/>
            <person name="Strieter R.M."/>
            <person name="Hughes M.A."/>
        </authorList>
    </citation>
    <scope>DISRUPTION PHENOTYPE</scope>
    <scope>PHARMACEUTICAL</scope>
    <source>
        <strain evidence="3">Sterne</strain>
    </source>
</reference>
<keyword id="KW-0131">Cell cycle</keyword>
<keyword id="KW-0132">Cell division</keyword>
<keyword id="KW-1003">Cell membrane</keyword>
<keyword id="KW-0472">Membrane</keyword>
<keyword id="KW-0582">Pharmaceutical</keyword>
<keyword id="KW-1185">Reference proteome</keyword>
<keyword id="KW-0812">Transmembrane</keyword>
<keyword id="KW-1133">Transmembrane helix</keyword>
<name>FTSX_BACAN</name>
<proteinExistence type="evidence at protein level"/>
<organism>
    <name type="scientific">Bacillus anthracis</name>
    <dbReference type="NCBI Taxonomy" id="1392"/>
    <lineage>
        <taxon>Bacteria</taxon>
        <taxon>Bacillati</taxon>
        <taxon>Bacillota</taxon>
        <taxon>Bacilli</taxon>
        <taxon>Bacillales</taxon>
        <taxon>Bacillaceae</taxon>
        <taxon>Bacillus</taxon>
        <taxon>Bacillus cereus group</taxon>
    </lineage>
</organism>
<protein>
    <recommendedName>
        <fullName evidence="1 6">Cell division protein FtsX</fullName>
    </recommendedName>
</protein>
<feature type="chain" id="PRO_0000421660" description="Cell division protein FtsX">
    <location>
        <begin position="1"/>
        <end position="297"/>
    </location>
</feature>
<feature type="topological domain" description="Cytoplasmic" evidence="2 4">
    <location>
        <begin position="1"/>
        <end position="24"/>
    </location>
</feature>
<feature type="transmembrane region" description="Helical" evidence="2">
    <location>
        <begin position="25"/>
        <end position="45"/>
    </location>
</feature>
<feature type="topological domain" description="Extracellular" evidence="2 4">
    <location>
        <begin position="46"/>
        <end position="171"/>
    </location>
</feature>
<feature type="transmembrane region" description="Helical" evidence="2">
    <location>
        <begin position="172"/>
        <end position="192"/>
    </location>
</feature>
<feature type="topological domain" description="Cytoplasmic" evidence="2 4">
    <location>
        <begin position="193"/>
        <end position="219"/>
    </location>
</feature>
<feature type="transmembrane region" description="Helical" evidence="2">
    <location>
        <begin position="220"/>
        <end position="240"/>
    </location>
</feature>
<feature type="topological domain" description="Extracellular" evidence="2 4">
    <location>
        <begin position="241"/>
        <end position="270"/>
    </location>
</feature>
<feature type="transmembrane region" description="Helical" evidence="2">
    <location>
        <begin position="271"/>
        <end position="291"/>
    </location>
</feature>
<feature type="topological domain" description="Cytoplasmic" evidence="2 4">
    <location>
        <begin position="292"/>
        <end position="297"/>
    </location>
</feature>
<evidence type="ECO:0000250" key="1">
    <source>
        <dbReference type="UniProtKB" id="O34876"/>
    </source>
</evidence>
<evidence type="ECO:0000255" key="2"/>
<evidence type="ECO:0000269" key="3">
    <source>
    </source>
</evidence>
<evidence type="ECO:0000303" key="4">
    <source>
    </source>
</evidence>
<evidence type="ECO:0000305" key="5"/>
<evidence type="ECO:0000312" key="6">
    <source>
        <dbReference type="EMBL" id="AAP29072.1"/>
    </source>
</evidence>
<evidence type="ECO:0000312" key="7">
    <source>
        <dbReference type="EMBL" id="AAT34552.1"/>
    </source>
</evidence>
<evidence type="ECO:0000312" key="8">
    <source>
        <dbReference type="EMBL" id="AAT57322.1"/>
    </source>
</evidence>
<accession>Q81X30</accession>
<accession>E9QZ83</accession>
<accession>E9QZ84</accession>
<accession>Q6HQW6</accession>
<accession>Q6KK85</accession>
<dbReference type="EMBL" id="AE016879">
    <property type="protein sequence ID" value="AAP29072.1"/>
    <property type="molecule type" value="Genomic_DNA"/>
</dbReference>
<dbReference type="EMBL" id="AE017334">
    <property type="protein sequence ID" value="AAT34552.1"/>
    <property type="molecule type" value="Genomic_DNA"/>
</dbReference>
<dbReference type="EMBL" id="AE017225">
    <property type="protein sequence ID" value="AAT57322.1"/>
    <property type="molecule type" value="Genomic_DNA"/>
</dbReference>
<dbReference type="RefSeq" id="NP_847586.1">
    <property type="nucleotide sequence ID" value="NC_003997.3"/>
</dbReference>
<dbReference type="RefSeq" id="WP_000645021.1">
    <property type="nucleotide sequence ID" value="NZ_WXXJ01000012.1"/>
</dbReference>
<dbReference type="RefSeq" id="YP_031272.1">
    <property type="nucleotide sequence ID" value="NC_005945.1"/>
</dbReference>
<dbReference type="SMR" id="Q81X30"/>
<dbReference type="STRING" id="261594.GBAA_5415"/>
<dbReference type="DNASU" id="1085005"/>
<dbReference type="GeneID" id="45025017"/>
<dbReference type="KEGG" id="ban:BA_5415"/>
<dbReference type="KEGG" id="bar:GBAA_5415"/>
<dbReference type="KEGG" id="bat:BAS5033"/>
<dbReference type="PATRIC" id="fig|198094.11.peg.5373"/>
<dbReference type="eggNOG" id="COG2177">
    <property type="taxonomic scope" value="Bacteria"/>
</dbReference>
<dbReference type="HOGENOM" id="CLU_073546_2_2_9"/>
<dbReference type="OMA" id="IKTMQMV"/>
<dbReference type="OrthoDB" id="9812531at2"/>
<dbReference type="Proteomes" id="UP000000427">
    <property type="component" value="Chromosome"/>
</dbReference>
<dbReference type="Proteomes" id="UP000000594">
    <property type="component" value="Chromosome"/>
</dbReference>
<dbReference type="GO" id="GO:0005886">
    <property type="term" value="C:plasma membrane"/>
    <property type="evidence" value="ECO:0000250"/>
    <property type="project" value="UniProtKB"/>
</dbReference>
<dbReference type="GO" id="GO:0051301">
    <property type="term" value="P:cell division"/>
    <property type="evidence" value="ECO:0007669"/>
    <property type="project" value="UniProtKB-KW"/>
</dbReference>
<dbReference type="GO" id="GO:0070098">
    <property type="term" value="P:chemokine-mediated signaling pathway"/>
    <property type="evidence" value="ECO:0000315"/>
    <property type="project" value="UniProtKB"/>
</dbReference>
<dbReference type="GO" id="GO:0045881">
    <property type="term" value="P:positive regulation of sporulation resulting in formation of a cellular spore"/>
    <property type="evidence" value="ECO:0000250"/>
    <property type="project" value="UniProtKB"/>
</dbReference>
<dbReference type="FunFam" id="3.30.70.3040:FF:000003">
    <property type="entry name" value="Cell division protein FtsX"/>
    <property type="match status" value="1"/>
</dbReference>
<dbReference type="Gene3D" id="3.30.70.3040">
    <property type="match status" value="1"/>
</dbReference>
<dbReference type="InterPro" id="IPR003838">
    <property type="entry name" value="ABC3_permease_C"/>
</dbReference>
<dbReference type="InterPro" id="IPR004513">
    <property type="entry name" value="FtsX"/>
</dbReference>
<dbReference type="InterPro" id="IPR040690">
    <property type="entry name" value="FtsX_ECD"/>
</dbReference>
<dbReference type="NCBIfam" id="NF038347">
    <property type="entry name" value="FtsX_Gpos"/>
    <property type="match status" value="1"/>
</dbReference>
<dbReference type="PANTHER" id="PTHR47755">
    <property type="entry name" value="CELL DIVISION PROTEIN FTSX"/>
    <property type="match status" value="1"/>
</dbReference>
<dbReference type="PANTHER" id="PTHR47755:SF1">
    <property type="entry name" value="CELL DIVISION PROTEIN FTSX"/>
    <property type="match status" value="1"/>
</dbReference>
<dbReference type="Pfam" id="PF02687">
    <property type="entry name" value="FtsX"/>
    <property type="match status" value="1"/>
</dbReference>
<dbReference type="Pfam" id="PF18075">
    <property type="entry name" value="FtsX_ECD"/>
    <property type="match status" value="1"/>
</dbReference>
<dbReference type="PIRSF" id="PIRSF003097">
    <property type="entry name" value="FtsX"/>
    <property type="match status" value="1"/>
</dbReference>
<gene>
    <name evidence="6" type="primary">ftsX</name>
    <name type="ordered locus">BA_5415</name>
    <name type="ordered locus">BAS5033</name>
    <name type="ordered locus">GBAA_5415</name>
</gene>